<keyword id="KW-0007">Acetylation</keyword>
<keyword id="KW-0158">Chromosome</keyword>
<keyword id="KW-0238">DNA-binding</keyword>
<keyword id="KW-1017">Isopeptide bond</keyword>
<keyword id="KW-0544">Nucleosome core</keyword>
<keyword id="KW-0539">Nucleus</keyword>
<keyword id="KW-0832">Ubl conjugation</keyword>
<comment type="function">
    <text>Core component of nucleosome. Nucleosomes wrap and compact DNA into chromatin, limiting DNA accessibility to the cellular machineries which require DNA as a template. Histones thereby play a central role in transcription regulation, DNA repair, DNA replication and chromosomal stability. DNA accessibility is regulated via a complex set of post-translational modifications of histones, also called histone code, and nucleosome remodeling.</text>
</comment>
<comment type="subunit">
    <text>The nucleosome is a histone octamer containing two molecules each of H2A, H2B, H3 and H4 assembled in one H3-H4 heterotetramer and two H2A-H2B heterodimers. The octamer wraps approximately 147 bp of DNA.</text>
</comment>
<comment type="subcellular location">
    <subcellularLocation>
        <location evidence="1">Nucleus</location>
    </subcellularLocation>
    <subcellularLocation>
        <location evidence="1">Chromosome</location>
    </subcellularLocation>
</comment>
<comment type="PTM">
    <text evidence="1">Can be acetylated to form H2BK6ac, H2BK33ac and H2BK34ac.</text>
</comment>
<comment type="PTM">
    <text evidence="1">Monoubiquitinated to form H2BK143ub1; may give a specific tag for epigenetic transcriptional activation.</text>
</comment>
<comment type="similarity">
    <text evidence="3">Belongs to the histone H2B family.</text>
</comment>
<comment type="caution">
    <text evidence="3">To ensure consistency between histone entries, we follow the 'Brno' nomenclature for histone modifications, with positions referring to those used in the literature for the 'closest' model organism. Due to slight variations in histone sequences between organisms and to the presence of initiator methionine in UniProtKB/Swiss-Prot sequences, the actual positions of modified amino acids in the sequence generally differ. In this entry the following conventions are used: H2BK6ac = acetylated Lys-7; H2BK33ac = acetylated Lys-36; H2BK34ac = acetylated Lys-37; H2BK143ub1 = monoubiquitinated Lys-144.</text>
</comment>
<accession>Q1SWQ1</accession>
<evidence type="ECO:0000250" key="1"/>
<evidence type="ECO:0000256" key="2">
    <source>
        <dbReference type="SAM" id="MobiDB-lite"/>
    </source>
</evidence>
<evidence type="ECO:0000305" key="3"/>
<protein>
    <recommendedName>
        <fullName>Probable histone H2B.2</fullName>
    </recommendedName>
</protein>
<proteinExistence type="inferred from homology"/>
<sequence>MAPKGEKKPAEKKPAEEKKSTVAEKAPAEKKPKAGKKLPKEGGSAAGEKKKKRSKKSVETYKIYIFKVLKQVHPDIGISSKAMGIMNSFINDIFEKLTQESSRLARYNKKPTITSREIQTAVRLVLPGELAKHDVSEGTKAVTKFTSS</sequence>
<reference key="1">
    <citation type="submission" date="2006-04" db="EMBL/GenBank/DDBJ databases">
        <authorList>
            <consortium name="The international Medicago genome annotation group"/>
        </authorList>
    </citation>
    <scope>NUCLEOTIDE SEQUENCE [LARGE SCALE GENOMIC DNA]</scope>
</reference>
<name>H2B2_MEDTR</name>
<feature type="initiator methionine" description="Removed" evidence="1">
    <location>
        <position position="1"/>
    </location>
</feature>
<feature type="chain" id="PRO_0000240001" description="Probable histone H2B.2">
    <location>
        <begin position="2"/>
        <end position="148"/>
    </location>
</feature>
<feature type="region of interest" description="Disordered" evidence="2">
    <location>
        <begin position="1"/>
        <end position="57"/>
    </location>
</feature>
<feature type="compositionally biased region" description="Basic and acidic residues" evidence="2">
    <location>
        <begin position="1"/>
        <end position="32"/>
    </location>
</feature>
<feature type="modified residue" description="N6-acetyllysine" evidence="1">
    <location>
        <position position="7"/>
    </location>
</feature>
<feature type="modified residue" description="N6-acetyllysine" evidence="1">
    <location>
        <position position="36"/>
    </location>
</feature>
<feature type="modified residue" description="N6-acetyllysine" evidence="1">
    <location>
        <position position="37"/>
    </location>
</feature>
<feature type="cross-link" description="Glycyl lysine isopeptide (Lys-Gly) (interchain with G-Cter in ubiquitin)" evidence="1">
    <location>
        <position position="144"/>
    </location>
</feature>
<organism>
    <name type="scientific">Medicago truncatula</name>
    <name type="common">Barrel medic</name>
    <name type="synonym">Medicago tribuloides</name>
    <dbReference type="NCBI Taxonomy" id="3880"/>
    <lineage>
        <taxon>Eukaryota</taxon>
        <taxon>Viridiplantae</taxon>
        <taxon>Streptophyta</taxon>
        <taxon>Embryophyta</taxon>
        <taxon>Tracheophyta</taxon>
        <taxon>Spermatophyta</taxon>
        <taxon>Magnoliopsida</taxon>
        <taxon>eudicotyledons</taxon>
        <taxon>Gunneridae</taxon>
        <taxon>Pentapetalae</taxon>
        <taxon>rosids</taxon>
        <taxon>fabids</taxon>
        <taxon>Fabales</taxon>
        <taxon>Fabaceae</taxon>
        <taxon>Papilionoideae</taxon>
        <taxon>50 kb inversion clade</taxon>
        <taxon>NPAAA clade</taxon>
        <taxon>Hologalegina</taxon>
        <taxon>IRL clade</taxon>
        <taxon>Trifolieae</taxon>
        <taxon>Medicago</taxon>
    </lineage>
</organism>
<dbReference type="EMBL" id="AC134242">
    <property type="status" value="NOT_ANNOTATED_CDS"/>
    <property type="molecule type" value="Genomic_DNA"/>
</dbReference>
<dbReference type="RefSeq" id="XP_013456410.1">
    <property type="nucleotide sequence ID" value="XM_013600956.3"/>
</dbReference>
<dbReference type="SMR" id="Q1SWQ1"/>
<dbReference type="EnsemblPlants" id="rna23742">
    <property type="protein sequence ID" value="RHN61294.1"/>
    <property type="gene ID" value="gene23742"/>
</dbReference>
<dbReference type="GeneID" id="25492748"/>
<dbReference type="Gramene" id="rna23742">
    <property type="protein sequence ID" value="RHN61294.1"/>
    <property type="gene ID" value="gene23742"/>
</dbReference>
<dbReference type="KEGG" id="mtr:25492748"/>
<dbReference type="HOGENOM" id="CLU_075666_1_3_1"/>
<dbReference type="OrthoDB" id="1421343at2759"/>
<dbReference type="GO" id="GO:0000786">
    <property type="term" value="C:nucleosome"/>
    <property type="evidence" value="ECO:0007669"/>
    <property type="project" value="UniProtKB-KW"/>
</dbReference>
<dbReference type="GO" id="GO:0005634">
    <property type="term" value="C:nucleus"/>
    <property type="evidence" value="ECO:0007669"/>
    <property type="project" value="UniProtKB-SubCell"/>
</dbReference>
<dbReference type="GO" id="GO:0003677">
    <property type="term" value="F:DNA binding"/>
    <property type="evidence" value="ECO:0007669"/>
    <property type="project" value="UniProtKB-KW"/>
</dbReference>
<dbReference type="GO" id="GO:0046982">
    <property type="term" value="F:protein heterodimerization activity"/>
    <property type="evidence" value="ECO:0007669"/>
    <property type="project" value="InterPro"/>
</dbReference>
<dbReference type="GO" id="GO:0030527">
    <property type="term" value="F:structural constituent of chromatin"/>
    <property type="evidence" value="ECO:0007669"/>
    <property type="project" value="InterPro"/>
</dbReference>
<dbReference type="CDD" id="cd22910">
    <property type="entry name" value="HFD_H2B"/>
    <property type="match status" value="1"/>
</dbReference>
<dbReference type="FunFam" id="1.10.20.10:FF:000014">
    <property type="entry name" value="Histone H2B"/>
    <property type="match status" value="1"/>
</dbReference>
<dbReference type="Gene3D" id="1.10.20.10">
    <property type="entry name" value="Histone, subunit A"/>
    <property type="match status" value="1"/>
</dbReference>
<dbReference type="InterPro" id="IPR009072">
    <property type="entry name" value="Histone-fold"/>
</dbReference>
<dbReference type="InterPro" id="IPR007125">
    <property type="entry name" value="Histone_H2A/H2B/H3"/>
</dbReference>
<dbReference type="InterPro" id="IPR000558">
    <property type="entry name" value="Histone_H2B"/>
</dbReference>
<dbReference type="PANTHER" id="PTHR23428">
    <property type="entry name" value="HISTONE H2B"/>
    <property type="match status" value="1"/>
</dbReference>
<dbReference type="Pfam" id="PF00125">
    <property type="entry name" value="Histone"/>
    <property type="match status" value="1"/>
</dbReference>
<dbReference type="PRINTS" id="PR00621">
    <property type="entry name" value="HISTONEH2B"/>
</dbReference>
<dbReference type="SMART" id="SM00427">
    <property type="entry name" value="H2B"/>
    <property type="match status" value="1"/>
</dbReference>
<dbReference type="SUPFAM" id="SSF47113">
    <property type="entry name" value="Histone-fold"/>
    <property type="match status" value="1"/>
</dbReference>